<dbReference type="EC" id="2.3.2.6" evidence="1"/>
<dbReference type="EMBL" id="CP000668">
    <property type="protein sequence ID" value="ABP40699.1"/>
    <property type="molecule type" value="Genomic_DNA"/>
</dbReference>
<dbReference type="RefSeq" id="WP_002211346.1">
    <property type="nucleotide sequence ID" value="NZ_CP009715.1"/>
</dbReference>
<dbReference type="SMR" id="A4TN37"/>
<dbReference type="GeneID" id="57977167"/>
<dbReference type="KEGG" id="ypp:YPDSF_2324"/>
<dbReference type="PATRIC" id="fig|386656.14.peg.3821"/>
<dbReference type="GO" id="GO:0005737">
    <property type="term" value="C:cytoplasm"/>
    <property type="evidence" value="ECO:0007669"/>
    <property type="project" value="UniProtKB-SubCell"/>
</dbReference>
<dbReference type="GO" id="GO:0008914">
    <property type="term" value="F:leucyl-tRNA--protein transferase activity"/>
    <property type="evidence" value="ECO:0007669"/>
    <property type="project" value="UniProtKB-UniRule"/>
</dbReference>
<dbReference type="GO" id="GO:0030163">
    <property type="term" value="P:protein catabolic process"/>
    <property type="evidence" value="ECO:0007669"/>
    <property type="project" value="UniProtKB-UniRule"/>
</dbReference>
<dbReference type="FunFam" id="3.30.70.3550:FF:000001">
    <property type="entry name" value="Leucyl/phenylalanyl-tRNA--protein transferase"/>
    <property type="match status" value="1"/>
</dbReference>
<dbReference type="FunFam" id="3.40.630.70:FF:000001">
    <property type="entry name" value="Leucyl/phenylalanyl-tRNA--protein transferase"/>
    <property type="match status" value="1"/>
</dbReference>
<dbReference type="Gene3D" id="3.40.630.70">
    <property type="entry name" value="Leucyl/phenylalanyl-tRNA-protein transferase, C-terminal domain"/>
    <property type="match status" value="1"/>
</dbReference>
<dbReference type="Gene3D" id="3.30.70.3550">
    <property type="entry name" value="Leucyl/phenylalanyl-tRNA-protein transferase, N-terminal domain"/>
    <property type="match status" value="1"/>
</dbReference>
<dbReference type="HAMAP" id="MF_00688">
    <property type="entry name" value="Leu_Phe_trans"/>
    <property type="match status" value="1"/>
</dbReference>
<dbReference type="InterPro" id="IPR016181">
    <property type="entry name" value="Acyl_CoA_acyltransferase"/>
</dbReference>
<dbReference type="InterPro" id="IPR004616">
    <property type="entry name" value="Leu/Phe-tRNA_Trfase"/>
</dbReference>
<dbReference type="InterPro" id="IPR042203">
    <property type="entry name" value="Leu/Phe-tRNA_Trfase_C"/>
</dbReference>
<dbReference type="InterPro" id="IPR042221">
    <property type="entry name" value="Leu/Phe-tRNA_Trfase_N"/>
</dbReference>
<dbReference type="NCBIfam" id="TIGR00667">
    <property type="entry name" value="aat"/>
    <property type="match status" value="1"/>
</dbReference>
<dbReference type="PANTHER" id="PTHR30098">
    <property type="entry name" value="LEUCYL/PHENYLALANYL-TRNA--PROTEIN TRANSFERASE"/>
    <property type="match status" value="1"/>
</dbReference>
<dbReference type="PANTHER" id="PTHR30098:SF2">
    <property type="entry name" value="LEUCYL_PHENYLALANYL-TRNA--PROTEIN TRANSFERASE"/>
    <property type="match status" value="1"/>
</dbReference>
<dbReference type="Pfam" id="PF03588">
    <property type="entry name" value="Leu_Phe_trans"/>
    <property type="match status" value="1"/>
</dbReference>
<dbReference type="SUPFAM" id="SSF55729">
    <property type="entry name" value="Acyl-CoA N-acyltransferases (Nat)"/>
    <property type="match status" value="1"/>
</dbReference>
<proteinExistence type="inferred from homology"/>
<protein>
    <recommendedName>
        <fullName evidence="1">Leucyl/phenylalanyl-tRNA--protein transferase</fullName>
        <ecNumber evidence="1">2.3.2.6</ecNumber>
    </recommendedName>
    <alternativeName>
        <fullName evidence="1">L/F-transferase</fullName>
    </alternativeName>
    <alternativeName>
        <fullName evidence="1">Leucyltransferase</fullName>
    </alternativeName>
    <alternativeName>
        <fullName evidence="1">Phenyalanyltransferase</fullName>
    </alternativeName>
</protein>
<organism>
    <name type="scientific">Yersinia pestis (strain Pestoides F)</name>
    <dbReference type="NCBI Taxonomy" id="386656"/>
    <lineage>
        <taxon>Bacteria</taxon>
        <taxon>Pseudomonadati</taxon>
        <taxon>Pseudomonadota</taxon>
        <taxon>Gammaproteobacteria</taxon>
        <taxon>Enterobacterales</taxon>
        <taxon>Yersiniaceae</taxon>
        <taxon>Yersinia</taxon>
    </lineage>
</organism>
<accession>A4TN37</accession>
<evidence type="ECO:0000255" key="1">
    <source>
        <dbReference type="HAMAP-Rule" id="MF_00688"/>
    </source>
</evidence>
<reference key="1">
    <citation type="submission" date="2007-02" db="EMBL/GenBank/DDBJ databases">
        <title>Complete sequence of chromosome of Yersinia pestis Pestoides F.</title>
        <authorList>
            <consortium name="US DOE Joint Genome Institute"/>
            <person name="Copeland A."/>
            <person name="Lucas S."/>
            <person name="Lapidus A."/>
            <person name="Barry K."/>
            <person name="Detter J.C."/>
            <person name="Glavina del Rio T."/>
            <person name="Hammon N."/>
            <person name="Israni S."/>
            <person name="Dalin E."/>
            <person name="Tice H."/>
            <person name="Pitluck S."/>
            <person name="Di Bartolo G."/>
            <person name="Chain P."/>
            <person name="Malfatti S."/>
            <person name="Shin M."/>
            <person name="Vergez L."/>
            <person name="Schmutz J."/>
            <person name="Larimer F."/>
            <person name="Land M."/>
            <person name="Hauser L."/>
            <person name="Worsham P."/>
            <person name="Chu M."/>
            <person name="Bearden S."/>
            <person name="Garcia E."/>
            <person name="Richardson P."/>
        </authorList>
    </citation>
    <scope>NUCLEOTIDE SEQUENCE [LARGE SCALE GENOMIC DNA]</scope>
    <source>
        <strain>Pestoides F</strain>
    </source>
</reference>
<comment type="function">
    <text evidence="1">Functions in the N-end rule pathway of protein degradation where it conjugates Leu, Phe and, less efficiently, Met from aminoacyl-tRNAs to the N-termini of proteins containing an N-terminal arginine or lysine.</text>
</comment>
<comment type="catalytic activity">
    <reaction evidence="1">
        <text>N-terminal L-lysyl-[protein] + L-leucyl-tRNA(Leu) = N-terminal L-leucyl-L-lysyl-[protein] + tRNA(Leu) + H(+)</text>
        <dbReference type="Rhea" id="RHEA:12340"/>
        <dbReference type="Rhea" id="RHEA-COMP:9613"/>
        <dbReference type="Rhea" id="RHEA-COMP:9622"/>
        <dbReference type="Rhea" id="RHEA-COMP:12670"/>
        <dbReference type="Rhea" id="RHEA-COMP:12671"/>
        <dbReference type="ChEBI" id="CHEBI:15378"/>
        <dbReference type="ChEBI" id="CHEBI:65249"/>
        <dbReference type="ChEBI" id="CHEBI:78442"/>
        <dbReference type="ChEBI" id="CHEBI:78494"/>
        <dbReference type="ChEBI" id="CHEBI:133043"/>
        <dbReference type="EC" id="2.3.2.6"/>
    </reaction>
</comment>
<comment type="catalytic activity">
    <reaction evidence="1">
        <text>N-terminal L-arginyl-[protein] + L-leucyl-tRNA(Leu) = N-terminal L-leucyl-L-arginyl-[protein] + tRNA(Leu) + H(+)</text>
        <dbReference type="Rhea" id="RHEA:50416"/>
        <dbReference type="Rhea" id="RHEA-COMP:9613"/>
        <dbReference type="Rhea" id="RHEA-COMP:9622"/>
        <dbReference type="Rhea" id="RHEA-COMP:12672"/>
        <dbReference type="Rhea" id="RHEA-COMP:12673"/>
        <dbReference type="ChEBI" id="CHEBI:15378"/>
        <dbReference type="ChEBI" id="CHEBI:64719"/>
        <dbReference type="ChEBI" id="CHEBI:78442"/>
        <dbReference type="ChEBI" id="CHEBI:78494"/>
        <dbReference type="ChEBI" id="CHEBI:133044"/>
        <dbReference type="EC" id="2.3.2.6"/>
    </reaction>
</comment>
<comment type="catalytic activity">
    <reaction evidence="1">
        <text>L-phenylalanyl-tRNA(Phe) + an N-terminal L-alpha-aminoacyl-[protein] = an N-terminal L-phenylalanyl-L-alpha-aminoacyl-[protein] + tRNA(Phe)</text>
        <dbReference type="Rhea" id="RHEA:43632"/>
        <dbReference type="Rhea" id="RHEA-COMP:9668"/>
        <dbReference type="Rhea" id="RHEA-COMP:9699"/>
        <dbReference type="Rhea" id="RHEA-COMP:10636"/>
        <dbReference type="Rhea" id="RHEA-COMP:10637"/>
        <dbReference type="ChEBI" id="CHEBI:78442"/>
        <dbReference type="ChEBI" id="CHEBI:78531"/>
        <dbReference type="ChEBI" id="CHEBI:78597"/>
        <dbReference type="ChEBI" id="CHEBI:83561"/>
        <dbReference type="EC" id="2.3.2.6"/>
    </reaction>
</comment>
<comment type="subcellular location">
    <subcellularLocation>
        <location evidence="1">Cytoplasm</location>
    </subcellularLocation>
</comment>
<comment type="similarity">
    <text evidence="1">Belongs to the L/F-transferase family.</text>
</comment>
<feature type="chain" id="PRO_0000304366" description="Leucyl/phenylalanyl-tRNA--protein transferase">
    <location>
        <begin position="1"/>
        <end position="236"/>
    </location>
</feature>
<sequence>MRVTQLSSQSFIFPSPELALREPNGLLALGGDLTAPRLLAAYQRGIFPWFNPGEMILWWSPDPRAVLFPEDLHISRSMRRFIRHCPYRFTLNHAFADVISACATERDEGTWIGRDVQQAYCQLHALGHAHSLEVWLENELVGGLYGVAVGAVFCGESMFSRADNASKSALMVFCHHFTQHGGELIDCQVLNAHTASLGAVEIPRNFFLQQLSQLQFSPLPAECWLPQSLNFSSAMQ</sequence>
<gene>
    <name evidence="1" type="primary">aat</name>
    <name type="ordered locus">YPDSF_2324</name>
</gene>
<keyword id="KW-0012">Acyltransferase</keyword>
<keyword id="KW-0963">Cytoplasm</keyword>
<keyword id="KW-0808">Transferase</keyword>
<name>LFTR_YERPP</name>